<evidence type="ECO:0000255" key="1">
    <source>
        <dbReference type="HAMAP-Rule" id="MF_01876"/>
    </source>
</evidence>
<reference key="1">
    <citation type="journal article" date="2008" name="J. Bacteriol.">
        <title>Complete genome sequence of the mosquitocidal bacterium Bacillus sphaericus C3-41 and comparison with those of closely related Bacillus species.</title>
        <authorList>
            <person name="Hu X."/>
            <person name="Fan W."/>
            <person name="Han B."/>
            <person name="Liu H."/>
            <person name="Zheng D."/>
            <person name="Li Q."/>
            <person name="Dong W."/>
            <person name="Yan J."/>
            <person name="Gao M."/>
            <person name="Berry C."/>
            <person name="Yuan Z."/>
        </authorList>
    </citation>
    <scope>NUCLEOTIDE SEQUENCE [LARGE SCALE GENOMIC DNA]</scope>
    <source>
        <strain>C3-41</strain>
    </source>
</reference>
<accession>B1HV79</accession>
<name>PSUG_LYSSC</name>
<gene>
    <name evidence="1" type="primary">psuG</name>
    <name type="ordered locus">Bsph_3909</name>
</gene>
<proteinExistence type="inferred from homology"/>
<keyword id="KW-0326">Glycosidase</keyword>
<keyword id="KW-0378">Hydrolase</keyword>
<keyword id="KW-0456">Lyase</keyword>
<keyword id="KW-0464">Manganese</keyword>
<keyword id="KW-0479">Metal-binding</keyword>
<comment type="function">
    <text evidence="1">Catalyzes the reversible cleavage of pseudouridine 5'-phosphate (PsiMP) to ribose 5-phosphate and uracil. Functions biologically in the cleavage direction, as part of a pseudouridine degradation pathway.</text>
</comment>
<comment type="catalytic activity">
    <reaction evidence="1">
        <text>D-ribose 5-phosphate + uracil = psi-UMP + H2O</text>
        <dbReference type="Rhea" id="RHEA:18337"/>
        <dbReference type="ChEBI" id="CHEBI:15377"/>
        <dbReference type="ChEBI" id="CHEBI:17568"/>
        <dbReference type="ChEBI" id="CHEBI:58380"/>
        <dbReference type="ChEBI" id="CHEBI:78346"/>
        <dbReference type="EC" id="4.2.1.70"/>
    </reaction>
</comment>
<comment type="cofactor">
    <cofactor evidence="1">
        <name>Mn(2+)</name>
        <dbReference type="ChEBI" id="CHEBI:29035"/>
    </cofactor>
    <text evidence="1">Binds 1 Mn(2+) ion per subunit.</text>
</comment>
<comment type="subunit">
    <text evidence="1">Homotrimer.</text>
</comment>
<comment type="similarity">
    <text evidence="1">Belongs to the pseudouridine-5'-phosphate glycosidase family.</text>
</comment>
<protein>
    <recommendedName>
        <fullName evidence="1">Pseudouridine-5'-phosphate glycosidase</fullName>
        <shortName evidence="1">PsiMP glycosidase</shortName>
        <ecNumber evidence="1">4.2.1.70</ecNumber>
    </recommendedName>
</protein>
<feature type="chain" id="PRO_0000390528" description="Pseudouridine-5'-phosphate glycosidase">
    <location>
        <begin position="1"/>
        <end position="304"/>
    </location>
</feature>
<feature type="active site" description="Proton donor" evidence="1">
    <location>
        <position position="25"/>
    </location>
</feature>
<feature type="active site" description="Nucleophile" evidence="1">
    <location>
        <position position="159"/>
    </location>
</feature>
<feature type="binding site" evidence="1">
    <location>
        <position position="86"/>
    </location>
    <ligand>
        <name>substrate</name>
    </ligand>
</feature>
<feature type="binding site" evidence="1">
    <location>
        <position position="106"/>
    </location>
    <ligand>
        <name>substrate</name>
    </ligand>
</feature>
<feature type="binding site" evidence="1">
    <location>
        <position position="138"/>
    </location>
    <ligand>
        <name>Mn(2+)</name>
        <dbReference type="ChEBI" id="CHEBI:29035"/>
    </ligand>
</feature>
<feature type="binding site" evidence="1">
    <location>
        <begin position="140"/>
        <end position="142"/>
    </location>
    <ligand>
        <name>substrate</name>
    </ligand>
</feature>
<organism>
    <name type="scientific">Lysinibacillus sphaericus (strain C3-41)</name>
    <dbReference type="NCBI Taxonomy" id="444177"/>
    <lineage>
        <taxon>Bacteria</taxon>
        <taxon>Bacillati</taxon>
        <taxon>Bacillota</taxon>
        <taxon>Bacilli</taxon>
        <taxon>Bacillales</taxon>
        <taxon>Bacillaceae</taxon>
        <taxon>Lysinibacillus</taxon>
    </lineage>
</organism>
<dbReference type="EC" id="4.2.1.70" evidence="1"/>
<dbReference type="EMBL" id="CP000817">
    <property type="protein sequence ID" value="ACA41381.1"/>
    <property type="molecule type" value="Genomic_DNA"/>
</dbReference>
<dbReference type="RefSeq" id="WP_012295426.1">
    <property type="nucleotide sequence ID" value="NC_010382.1"/>
</dbReference>
<dbReference type="SMR" id="B1HV79"/>
<dbReference type="EnsemblBacteria" id="ACA41381">
    <property type="protein sequence ID" value="ACA41381"/>
    <property type="gene ID" value="Bsph_3909"/>
</dbReference>
<dbReference type="KEGG" id="lsp:Bsph_3909"/>
<dbReference type="HOGENOM" id="CLU_012201_0_1_9"/>
<dbReference type="Proteomes" id="UP000002164">
    <property type="component" value="Chromosome"/>
</dbReference>
<dbReference type="GO" id="GO:0005737">
    <property type="term" value="C:cytoplasm"/>
    <property type="evidence" value="ECO:0007669"/>
    <property type="project" value="TreeGrafter"/>
</dbReference>
<dbReference type="GO" id="GO:0016798">
    <property type="term" value="F:hydrolase activity, acting on glycosyl bonds"/>
    <property type="evidence" value="ECO:0007669"/>
    <property type="project" value="UniProtKB-KW"/>
</dbReference>
<dbReference type="GO" id="GO:0046872">
    <property type="term" value="F:metal ion binding"/>
    <property type="evidence" value="ECO:0007669"/>
    <property type="project" value="UniProtKB-KW"/>
</dbReference>
<dbReference type="GO" id="GO:0004730">
    <property type="term" value="F:pseudouridylate synthase activity"/>
    <property type="evidence" value="ECO:0007669"/>
    <property type="project" value="UniProtKB-UniRule"/>
</dbReference>
<dbReference type="GO" id="GO:0046113">
    <property type="term" value="P:nucleobase catabolic process"/>
    <property type="evidence" value="ECO:0007669"/>
    <property type="project" value="UniProtKB-UniRule"/>
</dbReference>
<dbReference type="Gene3D" id="3.40.1790.10">
    <property type="entry name" value="Indigoidine synthase domain"/>
    <property type="match status" value="1"/>
</dbReference>
<dbReference type="HAMAP" id="MF_01876">
    <property type="entry name" value="PsiMP_glycosidase"/>
    <property type="match status" value="1"/>
</dbReference>
<dbReference type="InterPro" id="IPR022830">
    <property type="entry name" value="Indigdn_synthA-like"/>
</dbReference>
<dbReference type="InterPro" id="IPR007342">
    <property type="entry name" value="PsuG"/>
</dbReference>
<dbReference type="PANTHER" id="PTHR42909:SF1">
    <property type="entry name" value="CARBOHYDRATE KINASE PFKB DOMAIN-CONTAINING PROTEIN"/>
    <property type="match status" value="1"/>
</dbReference>
<dbReference type="PANTHER" id="PTHR42909">
    <property type="entry name" value="ZGC:136858"/>
    <property type="match status" value="1"/>
</dbReference>
<dbReference type="Pfam" id="PF04227">
    <property type="entry name" value="Indigoidine_A"/>
    <property type="match status" value="1"/>
</dbReference>
<dbReference type="SUPFAM" id="SSF110581">
    <property type="entry name" value="Indigoidine synthase A-like"/>
    <property type="match status" value="1"/>
</dbReference>
<sequence>MKEFIVLSEEVKAGQAKGLPIVALESTIISHGMPYPQNVQTAREVEQIIRDNGAVPATIALIDGKIKIGLSDEELEMFGNAQGVAKASRRDLGYLLATKKLGATTVAATMICAELAGIEIFVTGGIGGVHRGAETTMDVSADLEELAQTNVAVICAGAKSILDIGLTLEYLETKGVPVVGYGTDELPAFYTRQSGFDVNFQLDTPEEIAEMLSAKWQLGLKGGAVIANPIPEAEALEHGFITNIIEKALVEAEENGIQGKNVTPFLLGKVKELTEGKSLDANIALVKNNAVVGAKIAVAFNQLH</sequence>